<evidence type="ECO:0000255" key="1">
    <source>
        <dbReference type="HAMAP-Rule" id="MF_00362"/>
    </source>
</evidence>
<evidence type="ECO:0000305" key="2"/>
<sequence length="178" mass="19435">MGRTRENKEDVVADLKELLKESQLAVIIDYQGLSVAEITDLRRRIRPVGGTCKIAKNTLVRIAVDGDQNWQPMQEYLKGSSAVLLVQEDVGGIVKAYKSFQKDSKKTELRGGVMEGRSLTKDQVEALADLPSKEQLYAQIAGAINSITAKIAIGIKEVPSSVARGLQAYSEKEQGSES</sequence>
<comment type="function">
    <text evidence="1">Forms part of the ribosomal stalk, playing a central role in the interaction of the ribosome with GTP-bound translation factors.</text>
</comment>
<comment type="subunit">
    <text evidence="1">Part of the ribosomal stalk of the 50S ribosomal subunit. The N-terminus interacts with L11 and the large rRNA to form the base of the stalk. The C-terminus forms an elongated spine to which L12 dimers bind in a sequential fashion forming a multimeric L10(L12)X complex.</text>
</comment>
<comment type="similarity">
    <text evidence="1">Belongs to the universal ribosomal protein uL10 family.</text>
</comment>
<keyword id="KW-1185">Reference proteome</keyword>
<keyword id="KW-0687">Ribonucleoprotein</keyword>
<keyword id="KW-0689">Ribosomal protein</keyword>
<keyword id="KW-0694">RNA-binding</keyword>
<keyword id="KW-0699">rRNA-binding</keyword>
<gene>
    <name evidence="1" type="primary">rplJ</name>
    <name evidence="1" type="synonym">rpl10</name>
    <name type="ordered locus">PCC7424_1018</name>
</gene>
<name>RL10_GLOC7</name>
<proteinExistence type="inferred from homology"/>
<feature type="chain" id="PRO_1000120944" description="Large ribosomal subunit protein uL10">
    <location>
        <begin position="1"/>
        <end position="178"/>
    </location>
</feature>
<organism>
    <name type="scientific">Gloeothece citriformis (strain PCC 7424)</name>
    <name type="common">Cyanothece sp. (strain PCC 7424)</name>
    <dbReference type="NCBI Taxonomy" id="65393"/>
    <lineage>
        <taxon>Bacteria</taxon>
        <taxon>Bacillati</taxon>
        <taxon>Cyanobacteriota</taxon>
        <taxon>Cyanophyceae</taxon>
        <taxon>Oscillatoriophycideae</taxon>
        <taxon>Chroococcales</taxon>
        <taxon>Aphanothecaceae</taxon>
        <taxon>Gloeothece</taxon>
        <taxon>Gloeothece citriformis</taxon>
    </lineage>
</organism>
<accession>B7KIR6</accession>
<reference key="1">
    <citation type="journal article" date="2011" name="MBio">
        <title>Novel metabolic attributes of the genus Cyanothece, comprising a group of unicellular nitrogen-fixing Cyanobacteria.</title>
        <authorList>
            <person name="Bandyopadhyay A."/>
            <person name="Elvitigala T."/>
            <person name="Welsh E."/>
            <person name="Stockel J."/>
            <person name="Liberton M."/>
            <person name="Min H."/>
            <person name="Sherman L.A."/>
            <person name="Pakrasi H.B."/>
        </authorList>
    </citation>
    <scope>NUCLEOTIDE SEQUENCE [LARGE SCALE GENOMIC DNA]</scope>
    <source>
        <strain>PCC 7424</strain>
    </source>
</reference>
<protein>
    <recommendedName>
        <fullName evidence="1">Large ribosomal subunit protein uL10</fullName>
    </recommendedName>
    <alternativeName>
        <fullName evidence="2">50S ribosomal protein L10</fullName>
    </alternativeName>
</protein>
<dbReference type="EMBL" id="CP001291">
    <property type="protein sequence ID" value="ACK69472.1"/>
    <property type="molecule type" value="Genomic_DNA"/>
</dbReference>
<dbReference type="RefSeq" id="WP_012598419.1">
    <property type="nucleotide sequence ID" value="NC_011729.1"/>
</dbReference>
<dbReference type="SMR" id="B7KIR6"/>
<dbReference type="STRING" id="65393.PCC7424_1018"/>
<dbReference type="KEGG" id="cyc:PCC7424_1018"/>
<dbReference type="eggNOG" id="COG0244">
    <property type="taxonomic scope" value="Bacteria"/>
</dbReference>
<dbReference type="HOGENOM" id="CLU_092227_1_1_3"/>
<dbReference type="OrthoDB" id="9808307at2"/>
<dbReference type="Proteomes" id="UP000002384">
    <property type="component" value="Chromosome"/>
</dbReference>
<dbReference type="GO" id="GO:0015934">
    <property type="term" value="C:large ribosomal subunit"/>
    <property type="evidence" value="ECO:0007669"/>
    <property type="project" value="InterPro"/>
</dbReference>
<dbReference type="GO" id="GO:0070180">
    <property type="term" value="F:large ribosomal subunit rRNA binding"/>
    <property type="evidence" value="ECO:0007669"/>
    <property type="project" value="UniProtKB-UniRule"/>
</dbReference>
<dbReference type="GO" id="GO:0003735">
    <property type="term" value="F:structural constituent of ribosome"/>
    <property type="evidence" value="ECO:0007669"/>
    <property type="project" value="InterPro"/>
</dbReference>
<dbReference type="GO" id="GO:0006412">
    <property type="term" value="P:translation"/>
    <property type="evidence" value="ECO:0007669"/>
    <property type="project" value="UniProtKB-UniRule"/>
</dbReference>
<dbReference type="CDD" id="cd05797">
    <property type="entry name" value="Ribosomal_L10"/>
    <property type="match status" value="1"/>
</dbReference>
<dbReference type="Gene3D" id="3.30.70.1730">
    <property type="match status" value="1"/>
</dbReference>
<dbReference type="Gene3D" id="6.10.250.290">
    <property type="match status" value="1"/>
</dbReference>
<dbReference type="HAMAP" id="MF_00362">
    <property type="entry name" value="Ribosomal_uL10"/>
    <property type="match status" value="1"/>
</dbReference>
<dbReference type="InterPro" id="IPR001790">
    <property type="entry name" value="Ribosomal_uL10"/>
</dbReference>
<dbReference type="InterPro" id="IPR043141">
    <property type="entry name" value="Ribosomal_uL10-like_sf"/>
</dbReference>
<dbReference type="InterPro" id="IPR022973">
    <property type="entry name" value="Ribosomal_uL10_bac"/>
</dbReference>
<dbReference type="InterPro" id="IPR047865">
    <property type="entry name" value="Ribosomal_uL10_bac_type"/>
</dbReference>
<dbReference type="InterPro" id="IPR002363">
    <property type="entry name" value="Ribosomal_uL10_CS_bac"/>
</dbReference>
<dbReference type="NCBIfam" id="NF000955">
    <property type="entry name" value="PRK00099.1-1"/>
    <property type="match status" value="1"/>
</dbReference>
<dbReference type="PANTHER" id="PTHR11560">
    <property type="entry name" value="39S RIBOSOMAL PROTEIN L10, MITOCHONDRIAL"/>
    <property type="match status" value="1"/>
</dbReference>
<dbReference type="Pfam" id="PF00466">
    <property type="entry name" value="Ribosomal_L10"/>
    <property type="match status" value="1"/>
</dbReference>
<dbReference type="SUPFAM" id="SSF160369">
    <property type="entry name" value="Ribosomal protein L10-like"/>
    <property type="match status" value="1"/>
</dbReference>
<dbReference type="PROSITE" id="PS01109">
    <property type="entry name" value="RIBOSOMAL_L10"/>
    <property type="match status" value="1"/>
</dbReference>